<comment type="function">
    <text evidence="1">Component of the cleavage and polyadenylation specificity factor (CPSF) complex that plays a key role in pre-mRNA 3'-end formation, recognizing the AAUAAA signal sequence and interacting with poly(A) polymerase and other factors to bring about cleavage and poly(A) addition. FIP1L1 contributes to poly(A) site recognition and stimulates poly(A) addition. Binds to U-rich RNA sequence elements surrounding the poly(A) site. May act to tether poly(A) polymerase to the CPSF complex (By similarity).</text>
</comment>
<comment type="subunit">
    <text evidence="2 3">Component of the cleavage and polyadenylation specificity factor (CPSF) complex, composed of CPSF1, CPSF2, CPSF3, CPSF4 and FIP1L1. Found in a complex with CPSF1, FIP1L1 and PAPOLA. Interacts with CPSF1, CPSF4, CSTF2 and CSTF3. Interacts with AHCYL1 (when phosphorylated); the interaction is direct and associates AHCYL1 with the CPSF complex and RNA. Interacts with PAPOLA; the interaction seems to be increased by the interaction with AHCYL1. Interacts with NUDT21/CPSF5; this interaction occurs in a RNA sequence-specific manner. Interacts (preferentially via unphosphorylated form and Arg/Glu/Asp-rich domain) with CPSF6 (via Arg/Ser-rich domain); this interaction mediates, at least in part, the interaction between the CFIm and CPSF complexes and may be inhibited by CPSF6 hyper-phosphorylation. Interacts (preferentially via unphosphorylated form and Arg/Asp/Glu-rich domain) with CPSF7 (via Arg/Ser-rich domain); this interaction mediates, at least in part, the interaction between the CFIm and CPSF complexes and may be inhibited by CPSF7 hyper-phosphorylation.</text>
</comment>
<comment type="subcellular location">
    <subcellularLocation>
        <location evidence="1">Nucleus</location>
    </subcellularLocation>
</comment>
<comment type="similarity">
    <text evidence="5">Belongs to the FIP1 family.</text>
</comment>
<accession>Q5U317</accession>
<reference key="1">
    <citation type="journal article" date="2004" name="Genome Res.">
        <title>The status, quality, and expansion of the NIH full-length cDNA project: the Mammalian Gene Collection (MGC).</title>
        <authorList>
            <consortium name="The MGC Project Team"/>
        </authorList>
    </citation>
    <scope>NUCLEOTIDE SEQUENCE [LARGE SCALE MRNA]</scope>
    <source>
        <tissue>Heart</tissue>
    </source>
</reference>
<reference key="2">
    <citation type="journal article" date="2012" name="Nat. Commun.">
        <title>Quantitative maps of protein phosphorylation sites across 14 different rat organs and tissues.</title>
        <authorList>
            <person name="Lundby A."/>
            <person name="Secher A."/>
            <person name="Lage K."/>
            <person name="Nordsborg N.B."/>
            <person name="Dmytriyev A."/>
            <person name="Lundby C."/>
            <person name="Olsen J.V."/>
        </authorList>
    </citation>
    <scope>PHOSPHORYLATION [LARGE SCALE ANALYSIS] AT SER-88; SER-434; THR-436; SER-442 AND SER-496</scope>
    <scope>IDENTIFICATION BY MASS SPECTROMETRY [LARGE SCALE ANALYSIS]</scope>
</reference>
<proteinExistence type="evidence at protein level"/>
<dbReference type="EMBL" id="BC085767">
    <property type="protein sequence ID" value="AAH85767.1"/>
    <property type="molecule type" value="mRNA"/>
</dbReference>
<dbReference type="RefSeq" id="NP_001008296.1">
    <property type="nucleotide sequence ID" value="NM_001008295.1"/>
</dbReference>
<dbReference type="SMR" id="Q5U317"/>
<dbReference type="FunCoup" id="Q5U317">
    <property type="interactions" value="4249"/>
</dbReference>
<dbReference type="IntAct" id="Q5U317">
    <property type="interactions" value="2"/>
</dbReference>
<dbReference type="STRING" id="10116.ENSRNOP00000072529"/>
<dbReference type="GlyGen" id="Q5U317">
    <property type="glycosylation" value="1 site"/>
</dbReference>
<dbReference type="iPTMnet" id="Q5U317"/>
<dbReference type="PhosphoSitePlus" id="Q5U317"/>
<dbReference type="jPOST" id="Q5U317"/>
<dbReference type="PaxDb" id="10116-ENSRNOP00000049728"/>
<dbReference type="GeneID" id="289582"/>
<dbReference type="KEGG" id="rno:289582"/>
<dbReference type="UCSC" id="RGD:1309336">
    <property type="organism name" value="rat"/>
</dbReference>
<dbReference type="AGR" id="RGD:1309336"/>
<dbReference type="CTD" id="81608"/>
<dbReference type="RGD" id="1309336">
    <property type="gene designation" value="Fip1l1"/>
</dbReference>
<dbReference type="VEuPathDB" id="HostDB:ENSRNOG00000002275"/>
<dbReference type="eggNOG" id="KOG1049">
    <property type="taxonomic scope" value="Eukaryota"/>
</dbReference>
<dbReference type="HOGENOM" id="CLU_035577_1_0_1"/>
<dbReference type="InParanoid" id="Q5U317"/>
<dbReference type="OrthoDB" id="1917198at2759"/>
<dbReference type="Reactome" id="R-RNO-159231">
    <property type="pathway name" value="Transport of Mature mRNA Derived from an Intronless Transcript"/>
</dbReference>
<dbReference type="Reactome" id="R-RNO-72187">
    <property type="pathway name" value="mRNA 3'-end processing"/>
</dbReference>
<dbReference type="Reactome" id="R-RNO-72203">
    <property type="pathway name" value="Processing of Capped Intron-Containing Pre-mRNA"/>
</dbReference>
<dbReference type="Reactome" id="R-RNO-73856">
    <property type="pathway name" value="RNA Polymerase II Transcription Termination"/>
</dbReference>
<dbReference type="Reactome" id="R-RNO-77595">
    <property type="pathway name" value="Processing of Intronless Pre-mRNAs"/>
</dbReference>
<dbReference type="PRO" id="PR:Q5U317"/>
<dbReference type="Proteomes" id="UP000002494">
    <property type="component" value="Chromosome 14"/>
</dbReference>
<dbReference type="Bgee" id="ENSRNOG00000002275">
    <property type="expression patterns" value="Expressed in ovary and 20 other cell types or tissues"/>
</dbReference>
<dbReference type="ExpressionAtlas" id="Q5U317">
    <property type="expression patterns" value="baseline and differential"/>
</dbReference>
<dbReference type="GO" id="GO:0005847">
    <property type="term" value="C:mRNA cleavage and polyadenylation specificity factor complex"/>
    <property type="evidence" value="ECO:0000266"/>
    <property type="project" value="RGD"/>
</dbReference>
<dbReference type="GO" id="GO:0005634">
    <property type="term" value="C:nucleus"/>
    <property type="evidence" value="ECO:0000266"/>
    <property type="project" value="RGD"/>
</dbReference>
<dbReference type="GO" id="GO:0003723">
    <property type="term" value="F:RNA binding"/>
    <property type="evidence" value="ECO:0007669"/>
    <property type="project" value="UniProtKB-KW"/>
</dbReference>
<dbReference type="GO" id="GO:0006397">
    <property type="term" value="P:mRNA processing"/>
    <property type="evidence" value="ECO:0007669"/>
    <property type="project" value="UniProtKB-KW"/>
</dbReference>
<dbReference type="InterPro" id="IPR007854">
    <property type="entry name" value="Fip1_dom"/>
</dbReference>
<dbReference type="InterPro" id="IPR051187">
    <property type="entry name" value="Pre-mRNA_3'-end_processing_reg"/>
</dbReference>
<dbReference type="PANTHER" id="PTHR13484">
    <property type="entry name" value="FIP1-LIKE 1 PROTEIN"/>
    <property type="match status" value="1"/>
</dbReference>
<dbReference type="PANTHER" id="PTHR13484:SF9">
    <property type="entry name" value="PRE-MRNA 3'-END-PROCESSING FACTOR FIP1"/>
    <property type="match status" value="1"/>
</dbReference>
<dbReference type="Pfam" id="PF05182">
    <property type="entry name" value="Fip1"/>
    <property type="match status" value="1"/>
</dbReference>
<feature type="chain" id="PRO_0000215040" description="Pre-mRNA 3'-end-processing factor FIP1">
    <location>
        <begin position="1"/>
        <end position="536"/>
    </location>
</feature>
<feature type="region of interest" description="Necessary for stimulating PAPOLA activity" evidence="1">
    <location>
        <begin position="1"/>
        <end position="296"/>
    </location>
</feature>
<feature type="region of interest" description="Sufficient for interaction with PAPOLA" evidence="1">
    <location>
        <begin position="1"/>
        <end position="110"/>
    </location>
</feature>
<feature type="region of interest" description="Disordered" evidence="4">
    <location>
        <begin position="1"/>
        <end position="95"/>
    </location>
</feature>
<feature type="region of interest" description="Sufficient for interaction with CPSF4" evidence="1">
    <location>
        <begin position="136"/>
        <end position="219"/>
    </location>
</feature>
<feature type="region of interest" description="Disordered" evidence="4">
    <location>
        <begin position="212"/>
        <end position="246"/>
    </location>
</feature>
<feature type="region of interest" description="Disordered" evidence="4">
    <location>
        <begin position="300"/>
        <end position="536"/>
    </location>
</feature>
<feature type="region of interest" description="Sufficient for interaction with CPSF1 and CSTF3" evidence="1">
    <location>
        <begin position="383"/>
        <end position="536"/>
    </location>
</feature>
<feature type="region of interest" description="Arg/Asp/Glu-rich domain" evidence="2">
    <location>
        <begin position="397"/>
        <end position="432"/>
    </location>
</feature>
<feature type="compositionally biased region" description="Basic and acidic residues" evidence="4">
    <location>
        <begin position="1"/>
        <end position="10"/>
    </location>
</feature>
<feature type="compositionally biased region" description="Basic and acidic residues" evidence="4">
    <location>
        <begin position="32"/>
        <end position="42"/>
    </location>
</feature>
<feature type="compositionally biased region" description="Acidic residues" evidence="4">
    <location>
        <begin position="43"/>
        <end position="54"/>
    </location>
</feature>
<feature type="compositionally biased region" description="Acidic residues" evidence="4">
    <location>
        <begin position="80"/>
        <end position="94"/>
    </location>
</feature>
<feature type="compositionally biased region" description="Pro residues" evidence="4">
    <location>
        <begin position="300"/>
        <end position="344"/>
    </location>
</feature>
<feature type="compositionally biased region" description="Polar residues" evidence="4">
    <location>
        <begin position="374"/>
        <end position="390"/>
    </location>
</feature>
<feature type="compositionally biased region" description="Basic and acidic residues" evidence="4">
    <location>
        <begin position="394"/>
        <end position="434"/>
    </location>
</feature>
<feature type="compositionally biased region" description="Basic and acidic residues" evidence="4">
    <location>
        <begin position="443"/>
        <end position="470"/>
    </location>
</feature>
<feature type="compositionally biased region" description="Basic residues" evidence="4">
    <location>
        <begin position="484"/>
        <end position="493"/>
    </location>
</feature>
<feature type="compositionally biased region" description="Basic residues" evidence="4">
    <location>
        <begin position="502"/>
        <end position="512"/>
    </location>
</feature>
<feature type="modified residue" description="Phosphoserine" evidence="3">
    <location>
        <position position="84"/>
    </location>
</feature>
<feature type="modified residue" description="Phosphoserine" evidence="3">
    <location>
        <position position="86"/>
    </location>
</feature>
<feature type="modified residue" description="Phosphoserine" evidence="6">
    <location>
        <position position="88"/>
    </location>
</feature>
<feature type="modified residue" description="Phosphotyrosine" evidence="2">
    <location>
        <position position="366"/>
    </location>
</feature>
<feature type="modified residue" description="Phosphoserine" evidence="6">
    <location>
        <position position="434"/>
    </location>
</feature>
<feature type="modified residue" description="Phosphothreonine" evidence="6">
    <location>
        <position position="436"/>
    </location>
</feature>
<feature type="modified residue" description="Phosphoserine" evidence="2">
    <location>
        <position position="438"/>
    </location>
</feature>
<feature type="modified residue" description="Phosphoserine" evidence="6">
    <location>
        <position position="442"/>
    </location>
</feature>
<feature type="modified residue" description="Phosphoserine" evidence="6">
    <location>
        <position position="496"/>
    </location>
</feature>
<organism>
    <name type="scientific">Rattus norvegicus</name>
    <name type="common">Rat</name>
    <dbReference type="NCBI Taxonomy" id="10116"/>
    <lineage>
        <taxon>Eukaryota</taxon>
        <taxon>Metazoa</taxon>
        <taxon>Chordata</taxon>
        <taxon>Craniata</taxon>
        <taxon>Vertebrata</taxon>
        <taxon>Euteleostomi</taxon>
        <taxon>Mammalia</taxon>
        <taxon>Eutheria</taxon>
        <taxon>Euarchontoglires</taxon>
        <taxon>Glires</taxon>
        <taxon>Rodentia</taxon>
        <taxon>Myomorpha</taxon>
        <taxon>Muroidea</taxon>
        <taxon>Muridae</taxon>
        <taxon>Murinae</taxon>
        <taxon>Rattus</taxon>
    </lineage>
</organism>
<sequence length="536" mass="60188">MSAGEVERLVELSGGTGGDEEEEWLYGGPWDVHVHSDLAKDLDENEVERPEEENASANPPSGIEEEAAENGVAKPKVTETEDDSDSDSDDDEDDVHVTIGDIKTGAPQYGSYGTAPVNLNIKAGGRVYGNTGTKVKGVDLDAPGSINGVPLLEVDLDSFEDKPWRKPGADLSDYFNYGFNEDTWKAYCEKQKRIRMGLEVIPVTSTTNKITVQQGRTGNSEKEAALPSTKAEFTSPPSLFKTGLPPSRRLPGAIDVIGQTITISRVEGRRRANENSNIQVLSDRSATEVDNNFSKPPPFFPPGAPPTHLPPPPFLPPPPTVSTAPPLIPPPGFPPPPGAPPPSLIPTIESGHSSGYDSRSARAFPYGNVAFPHLTSSAPSWPSLVDTTKQWDYYARREKDRDRDRERDRDRERERDRDRERERTRERERERDHSPTPSVFNSDEERYRYREYAERGYERHRASREKEERHRERRHREKEETRHKSSRSNSRRRHESEEGDSHRRHKHKKSKRSKEGKEAGSEPVPEQESTEAAPAE</sequence>
<keyword id="KW-0507">mRNA processing</keyword>
<keyword id="KW-0539">Nucleus</keyword>
<keyword id="KW-0597">Phosphoprotein</keyword>
<keyword id="KW-1185">Reference proteome</keyword>
<keyword id="KW-0694">RNA-binding</keyword>
<evidence type="ECO:0000250" key="1"/>
<evidence type="ECO:0000250" key="2">
    <source>
        <dbReference type="UniProtKB" id="Q6UN15"/>
    </source>
</evidence>
<evidence type="ECO:0000250" key="3">
    <source>
        <dbReference type="UniProtKB" id="Q9D824"/>
    </source>
</evidence>
<evidence type="ECO:0000256" key="4">
    <source>
        <dbReference type="SAM" id="MobiDB-lite"/>
    </source>
</evidence>
<evidence type="ECO:0000305" key="5"/>
<evidence type="ECO:0007744" key="6">
    <source>
    </source>
</evidence>
<gene>
    <name type="primary">Fip1l1</name>
</gene>
<name>FIP1_RAT</name>
<protein>
    <recommendedName>
        <fullName>Pre-mRNA 3'-end-processing factor FIP1</fullName>
    </recommendedName>
    <alternativeName>
        <fullName>FIP1-like 1 protein</fullName>
    </alternativeName>
</protein>